<feature type="chain" id="PRO_1000080977" description="Nucleoside diphosphate kinase">
    <location>
        <begin position="1"/>
        <end position="143"/>
    </location>
</feature>
<feature type="active site" description="Pros-phosphohistidine intermediate" evidence="1">
    <location>
        <position position="117"/>
    </location>
</feature>
<feature type="binding site" evidence="1">
    <location>
        <position position="11"/>
    </location>
    <ligand>
        <name>ATP</name>
        <dbReference type="ChEBI" id="CHEBI:30616"/>
    </ligand>
</feature>
<feature type="binding site" evidence="1">
    <location>
        <position position="59"/>
    </location>
    <ligand>
        <name>ATP</name>
        <dbReference type="ChEBI" id="CHEBI:30616"/>
    </ligand>
</feature>
<feature type="binding site" evidence="1">
    <location>
        <position position="87"/>
    </location>
    <ligand>
        <name>ATP</name>
        <dbReference type="ChEBI" id="CHEBI:30616"/>
    </ligand>
</feature>
<feature type="binding site" evidence="1">
    <location>
        <position position="93"/>
    </location>
    <ligand>
        <name>ATP</name>
        <dbReference type="ChEBI" id="CHEBI:30616"/>
    </ligand>
</feature>
<feature type="binding site" evidence="1">
    <location>
        <position position="104"/>
    </location>
    <ligand>
        <name>ATP</name>
        <dbReference type="ChEBI" id="CHEBI:30616"/>
    </ligand>
</feature>
<feature type="binding site" evidence="1">
    <location>
        <position position="114"/>
    </location>
    <ligand>
        <name>ATP</name>
        <dbReference type="ChEBI" id="CHEBI:30616"/>
    </ligand>
</feature>
<proteinExistence type="inferred from homology"/>
<organism>
    <name type="scientific">Shewanella baltica (strain OS195)</name>
    <dbReference type="NCBI Taxonomy" id="399599"/>
    <lineage>
        <taxon>Bacteria</taxon>
        <taxon>Pseudomonadati</taxon>
        <taxon>Pseudomonadota</taxon>
        <taxon>Gammaproteobacteria</taxon>
        <taxon>Alteromonadales</taxon>
        <taxon>Shewanellaceae</taxon>
        <taxon>Shewanella</taxon>
    </lineage>
</organism>
<reference key="1">
    <citation type="submission" date="2007-11" db="EMBL/GenBank/DDBJ databases">
        <title>Complete sequence of chromosome of Shewanella baltica OS195.</title>
        <authorList>
            <consortium name="US DOE Joint Genome Institute"/>
            <person name="Copeland A."/>
            <person name="Lucas S."/>
            <person name="Lapidus A."/>
            <person name="Barry K."/>
            <person name="Glavina del Rio T."/>
            <person name="Dalin E."/>
            <person name="Tice H."/>
            <person name="Pitluck S."/>
            <person name="Chain P."/>
            <person name="Malfatti S."/>
            <person name="Shin M."/>
            <person name="Vergez L."/>
            <person name="Schmutz J."/>
            <person name="Larimer F."/>
            <person name="Land M."/>
            <person name="Hauser L."/>
            <person name="Kyrpides N."/>
            <person name="Kim E."/>
            <person name="Brettar I."/>
            <person name="Rodrigues J."/>
            <person name="Konstantinidis K."/>
            <person name="Klappenbach J."/>
            <person name="Hofle M."/>
            <person name="Tiedje J."/>
            <person name="Richardson P."/>
        </authorList>
    </citation>
    <scope>NUCLEOTIDE SEQUENCE [LARGE SCALE GENOMIC DNA]</scope>
    <source>
        <strain>OS195</strain>
    </source>
</reference>
<gene>
    <name evidence="1" type="primary">ndk</name>
    <name type="ordered locus">Sbal195_2493</name>
</gene>
<sequence length="143" mass="15470">MAIERTFSIIKPDAVAKNHIGAIYNRFETAGLKIVASKMLHLTKEQAEGFYAEHSERGFFGALVAFMTSGPIMVQVLEGENAVLAHREILGATNPAQAAPGTIRADFAESIDENAAHGSDAVESAAREIAYFFSAEELCPRTR</sequence>
<evidence type="ECO:0000255" key="1">
    <source>
        <dbReference type="HAMAP-Rule" id="MF_00451"/>
    </source>
</evidence>
<protein>
    <recommendedName>
        <fullName evidence="1">Nucleoside diphosphate kinase</fullName>
        <shortName evidence="1">NDK</shortName>
        <shortName evidence="1">NDP kinase</shortName>
        <ecNumber evidence="1">2.7.4.6</ecNumber>
    </recommendedName>
    <alternativeName>
        <fullName evidence="1">Nucleoside-2-P kinase</fullName>
    </alternativeName>
</protein>
<keyword id="KW-0067">ATP-binding</keyword>
<keyword id="KW-0963">Cytoplasm</keyword>
<keyword id="KW-0418">Kinase</keyword>
<keyword id="KW-0460">Magnesium</keyword>
<keyword id="KW-0479">Metal-binding</keyword>
<keyword id="KW-0546">Nucleotide metabolism</keyword>
<keyword id="KW-0547">Nucleotide-binding</keyword>
<keyword id="KW-0597">Phosphoprotein</keyword>
<keyword id="KW-0808">Transferase</keyword>
<accession>A9L3Q1</accession>
<name>NDK_SHEB9</name>
<comment type="function">
    <text evidence="1">Major role in the synthesis of nucleoside triphosphates other than ATP. The ATP gamma phosphate is transferred to the NDP beta phosphate via a ping-pong mechanism, using a phosphorylated active-site intermediate.</text>
</comment>
<comment type="catalytic activity">
    <reaction evidence="1">
        <text>a 2'-deoxyribonucleoside 5'-diphosphate + ATP = a 2'-deoxyribonucleoside 5'-triphosphate + ADP</text>
        <dbReference type="Rhea" id="RHEA:44640"/>
        <dbReference type="ChEBI" id="CHEBI:30616"/>
        <dbReference type="ChEBI" id="CHEBI:61560"/>
        <dbReference type="ChEBI" id="CHEBI:73316"/>
        <dbReference type="ChEBI" id="CHEBI:456216"/>
        <dbReference type="EC" id="2.7.4.6"/>
    </reaction>
</comment>
<comment type="catalytic activity">
    <reaction evidence="1">
        <text>a ribonucleoside 5'-diphosphate + ATP = a ribonucleoside 5'-triphosphate + ADP</text>
        <dbReference type="Rhea" id="RHEA:18113"/>
        <dbReference type="ChEBI" id="CHEBI:30616"/>
        <dbReference type="ChEBI" id="CHEBI:57930"/>
        <dbReference type="ChEBI" id="CHEBI:61557"/>
        <dbReference type="ChEBI" id="CHEBI:456216"/>
        <dbReference type="EC" id="2.7.4.6"/>
    </reaction>
</comment>
<comment type="cofactor">
    <cofactor evidence="1">
        <name>Mg(2+)</name>
        <dbReference type="ChEBI" id="CHEBI:18420"/>
    </cofactor>
</comment>
<comment type="subunit">
    <text evidence="1">Homotetramer.</text>
</comment>
<comment type="subcellular location">
    <subcellularLocation>
        <location evidence="1">Cytoplasm</location>
    </subcellularLocation>
</comment>
<comment type="similarity">
    <text evidence="1">Belongs to the NDK family.</text>
</comment>
<dbReference type="EC" id="2.7.4.6" evidence="1"/>
<dbReference type="EMBL" id="CP000891">
    <property type="protein sequence ID" value="ABX49661.1"/>
    <property type="molecule type" value="Genomic_DNA"/>
</dbReference>
<dbReference type="RefSeq" id="WP_006081848.1">
    <property type="nucleotide sequence ID" value="NC_009997.1"/>
</dbReference>
<dbReference type="SMR" id="A9L3Q1"/>
<dbReference type="GeneID" id="11774803"/>
<dbReference type="KEGG" id="sbn:Sbal195_2493"/>
<dbReference type="HOGENOM" id="CLU_060216_8_1_6"/>
<dbReference type="Proteomes" id="UP000000770">
    <property type="component" value="Chromosome"/>
</dbReference>
<dbReference type="GO" id="GO:0005737">
    <property type="term" value="C:cytoplasm"/>
    <property type="evidence" value="ECO:0007669"/>
    <property type="project" value="UniProtKB-SubCell"/>
</dbReference>
<dbReference type="GO" id="GO:0005524">
    <property type="term" value="F:ATP binding"/>
    <property type="evidence" value="ECO:0007669"/>
    <property type="project" value="UniProtKB-UniRule"/>
</dbReference>
<dbReference type="GO" id="GO:0046872">
    <property type="term" value="F:metal ion binding"/>
    <property type="evidence" value="ECO:0007669"/>
    <property type="project" value="UniProtKB-KW"/>
</dbReference>
<dbReference type="GO" id="GO:0004550">
    <property type="term" value="F:nucleoside diphosphate kinase activity"/>
    <property type="evidence" value="ECO:0007669"/>
    <property type="project" value="UniProtKB-UniRule"/>
</dbReference>
<dbReference type="GO" id="GO:0006241">
    <property type="term" value="P:CTP biosynthetic process"/>
    <property type="evidence" value="ECO:0007669"/>
    <property type="project" value="UniProtKB-UniRule"/>
</dbReference>
<dbReference type="GO" id="GO:0006183">
    <property type="term" value="P:GTP biosynthetic process"/>
    <property type="evidence" value="ECO:0007669"/>
    <property type="project" value="UniProtKB-UniRule"/>
</dbReference>
<dbReference type="GO" id="GO:0006228">
    <property type="term" value="P:UTP biosynthetic process"/>
    <property type="evidence" value="ECO:0007669"/>
    <property type="project" value="UniProtKB-UniRule"/>
</dbReference>
<dbReference type="CDD" id="cd04413">
    <property type="entry name" value="NDPk_I"/>
    <property type="match status" value="1"/>
</dbReference>
<dbReference type="FunFam" id="3.30.70.141:FF:000001">
    <property type="entry name" value="Nucleoside diphosphate kinase"/>
    <property type="match status" value="1"/>
</dbReference>
<dbReference type="Gene3D" id="3.30.70.141">
    <property type="entry name" value="Nucleoside diphosphate kinase-like domain"/>
    <property type="match status" value="1"/>
</dbReference>
<dbReference type="HAMAP" id="MF_00451">
    <property type="entry name" value="NDP_kinase"/>
    <property type="match status" value="1"/>
</dbReference>
<dbReference type="InterPro" id="IPR034907">
    <property type="entry name" value="NDK-like_dom"/>
</dbReference>
<dbReference type="InterPro" id="IPR036850">
    <property type="entry name" value="NDK-like_dom_sf"/>
</dbReference>
<dbReference type="InterPro" id="IPR001564">
    <property type="entry name" value="Nucleoside_diP_kinase"/>
</dbReference>
<dbReference type="InterPro" id="IPR023005">
    <property type="entry name" value="Nucleoside_diP_kinase_AS"/>
</dbReference>
<dbReference type="NCBIfam" id="NF001908">
    <property type="entry name" value="PRK00668.1"/>
    <property type="match status" value="1"/>
</dbReference>
<dbReference type="PANTHER" id="PTHR46161">
    <property type="entry name" value="NUCLEOSIDE DIPHOSPHATE KINASE"/>
    <property type="match status" value="1"/>
</dbReference>
<dbReference type="PANTHER" id="PTHR46161:SF3">
    <property type="entry name" value="NUCLEOSIDE DIPHOSPHATE KINASE DDB_G0292928-RELATED"/>
    <property type="match status" value="1"/>
</dbReference>
<dbReference type="Pfam" id="PF00334">
    <property type="entry name" value="NDK"/>
    <property type="match status" value="1"/>
</dbReference>
<dbReference type="PRINTS" id="PR01243">
    <property type="entry name" value="NUCDPKINASE"/>
</dbReference>
<dbReference type="SMART" id="SM00562">
    <property type="entry name" value="NDK"/>
    <property type="match status" value="1"/>
</dbReference>
<dbReference type="SUPFAM" id="SSF54919">
    <property type="entry name" value="Nucleoside diphosphate kinase, NDK"/>
    <property type="match status" value="1"/>
</dbReference>
<dbReference type="PROSITE" id="PS00469">
    <property type="entry name" value="NDPK"/>
    <property type="match status" value="1"/>
</dbReference>
<dbReference type="PROSITE" id="PS51374">
    <property type="entry name" value="NDPK_LIKE"/>
    <property type="match status" value="1"/>
</dbReference>